<dbReference type="EMBL" id="CU329672">
    <property type="protein sequence ID" value="CAA22477.1"/>
    <property type="molecule type" value="Genomic_DNA"/>
</dbReference>
<dbReference type="PIR" id="T40912">
    <property type="entry name" value="T40912"/>
</dbReference>
<dbReference type="RefSeq" id="NP_588451.1">
    <property type="nucleotide sequence ID" value="NM_001023442.2"/>
</dbReference>
<dbReference type="SMR" id="O94401"/>
<dbReference type="BioGRID" id="275415">
    <property type="interactions" value="16"/>
</dbReference>
<dbReference type="FunCoup" id="O94401">
    <property type="interactions" value="321"/>
</dbReference>
<dbReference type="STRING" id="284812.O94401"/>
<dbReference type="PaxDb" id="4896-SPCC126.08c.1"/>
<dbReference type="EnsemblFungi" id="SPCC126.08c.1">
    <property type="protein sequence ID" value="SPCC126.08c.1:pep"/>
    <property type="gene ID" value="SPCC126.08c"/>
</dbReference>
<dbReference type="KEGG" id="spo:2538834"/>
<dbReference type="PomBase" id="SPCC126.08c"/>
<dbReference type="VEuPathDB" id="FungiDB:SPCC126.08c"/>
<dbReference type="eggNOG" id="KOG3839">
    <property type="taxonomic scope" value="Eukaryota"/>
</dbReference>
<dbReference type="HOGENOM" id="CLU_041093_1_0_1"/>
<dbReference type="InParanoid" id="O94401"/>
<dbReference type="OMA" id="GCTADIR"/>
<dbReference type="PhylomeDB" id="O94401"/>
<dbReference type="Reactome" id="R-SPO-9013106">
    <property type="pathway name" value="RHOC GTPase cycle"/>
</dbReference>
<dbReference type="PRO" id="PR:O94401"/>
<dbReference type="Proteomes" id="UP000002485">
    <property type="component" value="Chromosome III"/>
</dbReference>
<dbReference type="GO" id="GO:0030134">
    <property type="term" value="C:COPII-coated ER to Golgi transport vesicle"/>
    <property type="evidence" value="ECO:0000318"/>
    <property type="project" value="GO_Central"/>
</dbReference>
<dbReference type="GO" id="GO:0005783">
    <property type="term" value="C:endoplasmic reticulum"/>
    <property type="evidence" value="ECO:0007005"/>
    <property type="project" value="PomBase"/>
</dbReference>
<dbReference type="GO" id="GO:0005789">
    <property type="term" value="C:endoplasmic reticulum membrane"/>
    <property type="evidence" value="ECO:0000318"/>
    <property type="project" value="GO_Central"/>
</dbReference>
<dbReference type="GO" id="GO:0005793">
    <property type="term" value="C:endoplasmic reticulum-Golgi intermediate compartment"/>
    <property type="evidence" value="ECO:0000318"/>
    <property type="project" value="GO_Central"/>
</dbReference>
<dbReference type="GO" id="GO:0000329">
    <property type="term" value="C:fungal-type vacuole membrane"/>
    <property type="evidence" value="ECO:0007005"/>
    <property type="project" value="PomBase"/>
</dbReference>
<dbReference type="GO" id="GO:0005794">
    <property type="term" value="C:Golgi apparatus"/>
    <property type="evidence" value="ECO:0007005"/>
    <property type="project" value="PomBase"/>
</dbReference>
<dbReference type="GO" id="GO:0000139">
    <property type="term" value="C:Golgi membrane"/>
    <property type="evidence" value="ECO:0000318"/>
    <property type="project" value="GO_Central"/>
</dbReference>
<dbReference type="GO" id="GO:0005537">
    <property type="term" value="F:D-mannose binding"/>
    <property type="evidence" value="ECO:0000318"/>
    <property type="project" value="GO_Central"/>
</dbReference>
<dbReference type="GO" id="GO:0006888">
    <property type="term" value="P:endoplasmic reticulum to Golgi vesicle-mediated transport"/>
    <property type="evidence" value="ECO:0000318"/>
    <property type="project" value="GO_Central"/>
</dbReference>
<dbReference type="CDD" id="cd07308">
    <property type="entry name" value="lectin_leg-like"/>
    <property type="match status" value="1"/>
</dbReference>
<dbReference type="Gene3D" id="2.60.120.200">
    <property type="match status" value="1"/>
</dbReference>
<dbReference type="InterPro" id="IPR013320">
    <property type="entry name" value="ConA-like_dom_sf"/>
</dbReference>
<dbReference type="InterPro" id="IPR051136">
    <property type="entry name" value="Intracellular_Lectin-GPT"/>
</dbReference>
<dbReference type="InterPro" id="IPR005052">
    <property type="entry name" value="Lectin_leg"/>
</dbReference>
<dbReference type="PANTHER" id="PTHR12223:SF45">
    <property type="entry name" value="RE50040P"/>
    <property type="match status" value="1"/>
</dbReference>
<dbReference type="PANTHER" id="PTHR12223">
    <property type="entry name" value="VESICULAR MANNOSE-BINDING LECTIN"/>
    <property type="match status" value="1"/>
</dbReference>
<dbReference type="Pfam" id="PF03388">
    <property type="entry name" value="Lectin_leg-like"/>
    <property type="match status" value="1"/>
</dbReference>
<dbReference type="SUPFAM" id="SSF49899">
    <property type="entry name" value="Concanavalin A-like lectins/glucanases"/>
    <property type="match status" value="1"/>
</dbReference>
<dbReference type="PROSITE" id="PS51328">
    <property type="entry name" value="L_LECTIN_LIKE"/>
    <property type="match status" value="1"/>
</dbReference>
<gene>
    <name type="ORF">SPCC126.08c</name>
</gene>
<keyword id="KW-0256">Endoplasmic reticulum</keyword>
<keyword id="KW-0333">Golgi apparatus</keyword>
<keyword id="KW-0472">Membrane</keyword>
<keyword id="KW-1185">Reference proteome</keyword>
<keyword id="KW-0732">Signal</keyword>
<keyword id="KW-0812">Transmembrane</keyword>
<keyword id="KW-1133">Transmembrane helix</keyword>
<keyword id="KW-0926">Vacuole</keyword>
<organism>
    <name type="scientific">Schizosaccharomyces pombe (strain 972 / ATCC 24843)</name>
    <name type="common">Fission yeast</name>
    <dbReference type="NCBI Taxonomy" id="284812"/>
    <lineage>
        <taxon>Eukaryota</taxon>
        <taxon>Fungi</taxon>
        <taxon>Dikarya</taxon>
        <taxon>Ascomycota</taxon>
        <taxon>Taphrinomycotina</taxon>
        <taxon>Schizosaccharomycetes</taxon>
        <taxon>Schizosaccharomycetales</taxon>
        <taxon>Schizosaccharomycetaceae</taxon>
        <taxon>Schizosaccharomyces</taxon>
    </lineage>
</organism>
<accession>O94401</accession>
<reference evidence="5" key="1">
    <citation type="journal article" date="2002" name="Nature">
        <title>The genome sequence of Schizosaccharomyces pombe.</title>
        <authorList>
            <person name="Wood V."/>
            <person name="Gwilliam R."/>
            <person name="Rajandream M.A."/>
            <person name="Lyne M.H."/>
            <person name="Lyne R."/>
            <person name="Stewart A."/>
            <person name="Sgouros J.G."/>
            <person name="Peat N."/>
            <person name="Hayles J."/>
            <person name="Baker S.G."/>
            <person name="Basham D."/>
            <person name="Bowman S."/>
            <person name="Brooks K."/>
            <person name="Brown D."/>
            <person name="Brown S."/>
            <person name="Chillingworth T."/>
            <person name="Churcher C.M."/>
            <person name="Collins M."/>
            <person name="Connor R."/>
            <person name="Cronin A."/>
            <person name="Davis P."/>
            <person name="Feltwell T."/>
            <person name="Fraser A."/>
            <person name="Gentles S."/>
            <person name="Goble A."/>
            <person name="Hamlin N."/>
            <person name="Harris D.E."/>
            <person name="Hidalgo J."/>
            <person name="Hodgson G."/>
            <person name="Holroyd S."/>
            <person name="Hornsby T."/>
            <person name="Howarth S."/>
            <person name="Huckle E.J."/>
            <person name="Hunt S."/>
            <person name="Jagels K."/>
            <person name="James K.D."/>
            <person name="Jones L."/>
            <person name="Jones M."/>
            <person name="Leather S."/>
            <person name="McDonald S."/>
            <person name="McLean J."/>
            <person name="Mooney P."/>
            <person name="Moule S."/>
            <person name="Mungall K.L."/>
            <person name="Murphy L.D."/>
            <person name="Niblett D."/>
            <person name="Odell C."/>
            <person name="Oliver K."/>
            <person name="O'Neil S."/>
            <person name="Pearson D."/>
            <person name="Quail M.A."/>
            <person name="Rabbinowitsch E."/>
            <person name="Rutherford K.M."/>
            <person name="Rutter S."/>
            <person name="Saunders D."/>
            <person name="Seeger K."/>
            <person name="Sharp S."/>
            <person name="Skelton J."/>
            <person name="Simmonds M.N."/>
            <person name="Squares R."/>
            <person name="Squares S."/>
            <person name="Stevens K."/>
            <person name="Taylor K."/>
            <person name="Taylor R.G."/>
            <person name="Tivey A."/>
            <person name="Walsh S.V."/>
            <person name="Warren T."/>
            <person name="Whitehead S."/>
            <person name="Woodward J.R."/>
            <person name="Volckaert G."/>
            <person name="Aert R."/>
            <person name="Robben J."/>
            <person name="Grymonprez B."/>
            <person name="Weltjens I."/>
            <person name="Vanstreels E."/>
            <person name="Rieger M."/>
            <person name="Schaefer M."/>
            <person name="Mueller-Auer S."/>
            <person name="Gabel C."/>
            <person name="Fuchs M."/>
            <person name="Duesterhoeft A."/>
            <person name="Fritzc C."/>
            <person name="Holzer E."/>
            <person name="Moestl D."/>
            <person name="Hilbert H."/>
            <person name="Borzym K."/>
            <person name="Langer I."/>
            <person name="Beck A."/>
            <person name="Lehrach H."/>
            <person name="Reinhardt R."/>
            <person name="Pohl T.M."/>
            <person name="Eger P."/>
            <person name="Zimmermann W."/>
            <person name="Wedler H."/>
            <person name="Wambutt R."/>
            <person name="Purnelle B."/>
            <person name="Goffeau A."/>
            <person name="Cadieu E."/>
            <person name="Dreano S."/>
            <person name="Gloux S."/>
            <person name="Lelaure V."/>
            <person name="Mottier S."/>
            <person name="Galibert F."/>
            <person name="Aves S.J."/>
            <person name="Xiang Z."/>
            <person name="Hunt C."/>
            <person name="Moore K."/>
            <person name="Hurst S.M."/>
            <person name="Lucas M."/>
            <person name="Rochet M."/>
            <person name="Gaillardin C."/>
            <person name="Tallada V.A."/>
            <person name="Garzon A."/>
            <person name="Thode G."/>
            <person name="Daga R.R."/>
            <person name="Cruzado L."/>
            <person name="Jimenez J."/>
            <person name="Sanchez M."/>
            <person name="del Rey F."/>
            <person name="Benito J."/>
            <person name="Dominguez A."/>
            <person name="Revuelta J.L."/>
            <person name="Moreno S."/>
            <person name="Armstrong J."/>
            <person name="Forsburg S.L."/>
            <person name="Cerutti L."/>
            <person name="Lowe T."/>
            <person name="McCombie W.R."/>
            <person name="Paulsen I."/>
            <person name="Potashkin J."/>
            <person name="Shpakovski G.V."/>
            <person name="Ussery D."/>
            <person name="Barrell B.G."/>
            <person name="Nurse P."/>
        </authorList>
    </citation>
    <scope>NUCLEOTIDE SEQUENCE [LARGE SCALE GENOMIC DNA]</scope>
    <source>
        <strain>972 / ATCC 24843</strain>
    </source>
</reference>
<reference evidence="4" key="2">
    <citation type="journal article" date="2006" name="Nat. Biotechnol.">
        <title>ORFeome cloning and global analysis of protein localization in the fission yeast Schizosaccharomyces pombe.</title>
        <authorList>
            <person name="Matsuyama A."/>
            <person name="Arai R."/>
            <person name="Yashiroda Y."/>
            <person name="Shirai A."/>
            <person name="Kamata A."/>
            <person name="Sekido S."/>
            <person name="Kobayashi Y."/>
            <person name="Hashimoto A."/>
            <person name="Hamamoto M."/>
            <person name="Hiraoka Y."/>
            <person name="Horinouchi S."/>
            <person name="Yoshida M."/>
        </authorList>
    </citation>
    <scope>SUBCELLULAR LOCATION [LARGE SCALE ANALYSIS]</scope>
</reference>
<evidence type="ECO:0000255" key="1"/>
<evidence type="ECO:0000255" key="2">
    <source>
        <dbReference type="PROSITE-ProRule" id="PRU00658"/>
    </source>
</evidence>
<evidence type="ECO:0000269" key="3">
    <source>
    </source>
</evidence>
<evidence type="ECO:0000305" key="4"/>
<evidence type="ECO:0000312" key="5">
    <source>
        <dbReference type="EMBL" id="CAA22477.1"/>
    </source>
</evidence>
<name>YQF8_SCHPO</name>
<comment type="subcellular location">
    <subcellularLocation>
        <location evidence="4">Membrane</location>
        <topology evidence="4">Single-pass type I membrane protein</topology>
    </subcellularLocation>
    <subcellularLocation>
        <location evidence="3">Endoplasmic reticulum</location>
    </subcellularLocation>
    <subcellularLocation>
        <location evidence="3">Golgi apparatus</location>
    </subcellularLocation>
    <subcellularLocation>
        <location evidence="3">Vacuole</location>
    </subcellularLocation>
</comment>
<proteinExistence type="inferred from homology"/>
<feature type="signal peptide" evidence="1">
    <location>
        <begin position="1"/>
        <end position="22"/>
    </location>
</feature>
<feature type="chain" id="PRO_0000316862" description="L-type lectin-like domain-containing protein C126.08c" evidence="1">
    <location>
        <begin position="23"/>
        <end position="312"/>
    </location>
</feature>
<feature type="topological domain" description="Extracellular" evidence="1">
    <location>
        <begin position="23"/>
        <end position="280"/>
    </location>
</feature>
<feature type="transmembrane region" description="Helical" evidence="1">
    <location>
        <begin position="281"/>
        <end position="301"/>
    </location>
</feature>
<feature type="topological domain" description="Cytoplasmic" evidence="1">
    <location>
        <begin position="302"/>
        <end position="312"/>
    </location>
</feature>
<feature type="domain" description="L-type lectin-like" evidence="2">
    <location>
        <begin position="24"/>
        <end position="248"/>
    </location>
</feature>
<sequence>MFFSVKNVFLLGIFGFVLGALAETSHLERLSLEAPYINHGMRNLWWEYGGSTVIDRKNGIFLTQDVQNQQGWISTRLPTPSSSFEVLFQFRINSESTSLFGDGLAFFLAAERAKPGPVFGFTDKFNGYGIFIDTYNNHRPGTLFPRVIVMKGDGHTPYDYENDGKANEIASCSALNVRGNDYNLGKLKYDKNAKKLRFEIAYQGSSSFIKCFDLNEVELPLTTFMSFSAHTGDLSESHEIASILSRTITDIDDEGTPEIPAEELKGTTYGQKKGSFKKRLIILLLSLIVIFSIFALRSYQVQQEKNRRTTVL</sequence>
<protein>
    <recommendedName>
        <fullName>L-type lectin-like domain-containing protein C126.08c</fullName>
    </recommendedName>
</protein>